<evidence type="ECO:0000255" key="1">
    <source>
        <dbReference type="HAMAP-Rule" id="MF_00012"/>
    </source>
</evidence>
<comment type="function">
    <text evidence="1">Functions in the biosynthesis of branched-chain amino acids. Catalyzes the dehydration of (2R,3R)-2,3-dihydroxy-3-methylpentanoate (2,3-dihydroxy-3-methylvalerate) into 2-oxo-3-methylpentanoate (2-oxo-3-methylvalerate) and of (2R)-2,3-dihydroxy-3-methylbutanoate (2,3-dihydroxyisovalerate) into 2-oxo-3-methylbutanoate (2-oxoisovalerate), the penultimate precursor to L-isoleucine and L-valine, respectively.</text>
</comment>
<comment type="catalytic activity">
    <reaction evidence="1">
        <text>(2R)-2,3-dihydroxy-3-methylbutanoate = 3-methyl-2-oxobutanoate + H2O</text>
        <dbReference type="Rhea" id="RHEA:24809"/>
        <dbReference type="ChEBI" id="CHEBI:11851"/>
        <dbReference type="ChEBI" id="CHEBI:15377"/>
        <dbReference type="ChEBI" id="CHEBI:49072"/>
        <dbReference type="EC" id="4.2.1.9"/>
    </reaction>
    <physiologicalReaction direction="left-to-right" evidence="1">
        <dbReference type="Rhea" id="RHEA:24810"/>
    </physiologicalReaction>
</comment>
<comment type="catalytic activity">
    <reaction evidence="1">
        <text>(2R,3R)-2,3-dihydroxy-3-methylpentanoate = (S)-3-methyl-2-oxopentanoate + H2O</text>
        <dbReference type="Rhea" id="RHEA:27694"/>
        <dbReference type="ChEBI" id="CHEBI:15377"/>
        <dbReference type="ChEBI" id="CHEBI:35146"/>
        <dbReference type="ChEBI" id="CHEBI:49258"/>
        <dbReference type="EC" id="4.2.1.9"/>
    </reaction>
    <physiologicalReaction direction="left-to-right" evidence="1">
        <dbReference type="Rhea" id="RHEA:27695"/>
    </physiologicalReaction>
</comment>
<comment type="cofactor">
    <cofactor evidence="1">
        <name>[2Fe-2S] cluster</name>
        <dbReference type="ChEBI" id="CHEBI:190135"/>
    </cofactor>
    <text evidence="1">Binds 1 [2Fe-2S] cluster per subunit. This cluster acts as a Lewis acid cofactor.</text>
</comment>
<comment type="cofactor">
    <cofactor evidence="1">
        <name>Mg(2+)</name>
        <dbReference type="ChEBI" id="CHEBI:18420"/>
    </cofactor>
</comment>
<comment type="pathway">
    <text evidence="1">Amino-acid biosynthesis; L-isoleucine biosynthesis; L-isoleucine from 2-oxobutanoate: step 3/4.</text>
</comment>
<comment type="pathway">
    <text evidence="1">Amino-acid biosynthesis; L-valine biosynthesis; L-valine from pyruvate: step 3/4.</text>
</comment>
<comment type="subunit">
    <text evidence="1">Homodimer.</text>
</comment>
<comment type="similarity">
    <text evidence="1">Belongs to the IlvD/Edd family.</text>
</comment>
<feature type="chain" id="PRO_1000201779" description="Dihydroxy-acid dehydratase">
    <location>
        <begin position="1"/>
        <end position="553"/>
    </location>
</feature>
<feature type="active site" description="Proton acceptor" evidence="1">
    <location>
        <position position="467"/>
    </location>
</feature>
<feature type="binding site" evidence="1">
    <location>
        <position position="78"/>
    </location>
    <ligand>
        <name>Mg(2+)</name>
        <dbReference type="ChEBI" id="CHEBI:18420"/>
    </ligand>
</feature>
<feature type="binding site" evidence="1">
    <location>
        <position position="119"/>
    </location>
    <ligand>
        <name>[2Fe-2S] cluster</name>
        <dbReference type="ChEBI" id="CHEBI:190135"/>
    </ligand>
</feature>
<feature type="binding site" evidence="1">
    <location>
        <position position="120"/>
    </location>
    <ligand>
        <name>Mg(2+)</name>
        <dbReference type="ChEBI" id="CHEBI:18420"/>
    </ligand>
</feature>
<feature type="binding site" description="via carbamate group" evidence="1">
    <location>
        <position position="121"/>
    </location>
    <ligand>
        <name>Mg(2+)</name>
        <dbReference type="ChEBI" id="CHEBI:18420"/>
    </ligand>
</feature>
<feature type="binding site" evidence="1">
    <location>
        <position position="193"/>
    </location>
    <ligand>
        <name>[2Fe-2S] cluster</name>
        <dbReference type="ChEBI" id="CHEBI:190135"/>
    </ligand>
</feature>
<feature type="binding site" evidence="1">
    <location>
        <position position="441"/>
    </location>
    <ligand>
        <name>Mg(2+)</name>
        <dbReference type="ChEBI" id="CHEBI:18420"/>
    </ligand>
</feature>
<feature type="modified residue" description="N6-carboxylysine" evidence="1">
    <location>
        <position position="121"/>
    </location>
</feature>
<dbReference type="EC" id="4.2.1.9" evidence="1"/>
<dbReference type="EMBL" id="CP001661">
    <property type="protein sequence ID" value="ACT17550.1"/>
    <property type="molecule type" value="Genomic_DNA"/>
</dbReference>
<dbReference type="SMR" id="C6E521"/>
<dbReference type="STRING" id="443144.GM21_1494"/>
<dbReference type="KEGG" id="gem:GM21_1494"/>
<dbReference type="eggNOG" id="COG0129">
    <property type="taxonomic scope" value="Bacteria"/>
</dbReference>
<dbReference type="HOGENOM" id="CLU_014271_4_2_7"/>
<dbReference type="OrthoDB" id="9807077at2"/>
<dbReference type="UniPathway" id="UPA00047">
    <property type="reaction ID" value="UER00057"/>
</dbReference>
<dbReference type="UniPathway" id="UPA00049">
    <property type="reaction ID" value="UER00061"/>
</dbReference>
<dbReference type="GO" id="GO:0005829">
    <property type="term" value="C:cytosol"/>
    <property type="evidence" value="ECO:0007669"/>
    <property type="project" value="TreeGrafter"/>
</dbReference>
<dbReference type="GO" id="GO:0051537">
    <property type="term" value="F:2 iron, 2 sulfur cluster binding"/>
    <property type="evidence" value="ECO:0007669"/>
    <property type="project" value="UniProtKB-UniRule"/>
</dbReference>
<dbReference type="GO" id="GO:0004160">
    <property type="term" value="F:dihydroxy-acid dehydratase activity"/>
    <property type="evidence" value="ECO:0007669"/>
    <property type="project" value="UniProtKB-UniRule"/>
</dbReference>
<dbReference type="GO" id="GO:0000287">
    <property type="term" value="F:magnesium ion binding"/>
    <property type="evidence" value="ECO:0007669"/>
    <property type="project" value="UniProtKB-UniRule"/>
</dbReference>
<dbReference type="GO" id="GO:0009097">
    <property type="term" value="P:isoleucine biosynthetic process"/>
    <property type="evidence" value="ECO:0007669"/>
    <property type="project" value="UniProtKB-UniRule"/>
</dbReference>
<dbReference type="GO" id="GO:0009099">
    <property type="term" value="P:L-valine biosynthetic process"/>
    <property type="evidence" value="ECO:0007669"/>
    <property type="project" value="UniProtKB-UniRule"/>
</dbReference>
<dbReference type="FunFam" id="3.50.30.80:FF:000001">
    <property type="entry name" value="Dihydroxy-acid dehydratase"/>
    <property type="match status" value="1"/>
</dbReference>
<dbReference type="Gene3D" id="3.50.30.80">
    <property type="entry name" value="IlvD/EDD C-terminal domain-like"/>
    <property type="match status" value="1"/>
</dbReference>
<dbReference type="HAMAP" id="MF_00012">
    <property type="entry name" value="IlvD"/>
    <property type="match status" value="1"/>
</dbReference>
<dbReference type="InterPro" id="IPR042096">
    <property type="entry name" value="Dihydro-acid_dehy_C"/>
</dbReference>
<dbReference type="InterPro" id="IPR004404">
    <property type="entry name" value="DihydroxyA_deHydtase"/>
</dbReference>
<dbReference type="InterPro" id="IPR020558">
    <property type="entry name" value="DiOHA_6PGluconate_deHydtase_CS"/>
</dbReference>
<dbReference type="InterPro" id="IPR056740">
    <property type="entry name" value="ILV_EDD_C"/>
</dbReference>
<dbReference type="InterPro" id="IPR000581">
    <property type="entry name" value="ILV_EDD_N"/>
</dbReference>
<dbReference type="InterPro" id="IPR037237">
    <property type="entry name" value="IlvD/EDD_N"/>
</dbReference>
<dbReference type="NCBIfam" id="TIGR00110">
    <property type="entry name" value="ilvD"/>
    <property type="match status" value="1"/>
</dbReference>
<dbReference type="NCBIfam" id="NF002068">
    <property type="entry name" value="PRK00911.1"/>
    <property type="match status" value="1"/>
</dbReference>
<dbReference type="PANTHER" id="PTHR43661">
    <property type="entry name" value="D-XYLONATE DEHYDRATASE"/>
    <property type="match status" value="1"/>
</dbReference>
<dbReference type="PANTHER" id="PTHR43661:SF3">
    <property type="entry name" value="D-XYLONATE DEHYDRATASE YAGF-RELATED"/>
    <property type="match status" value="1"/>
</dbReference>
<dbReference type="Pfam" id="PF24877">
    <property type="entry name" value="ILV_EDD_C"/>
    <property type="match status" value="1"/>
</dbReference>
<dbReference type="Pfam" id="PF00920">
    <property type="entry name" value="ILVD_EDD_N"/>
    <property type="match status" value="1"/>
</dbReference>
<dbReference type="SUPFAM" id="SSF143975">
    <property type="entry name" value="IlvD/EDD N-terminal domain-like"/>
    <property type="match status" value="1"/>
</dbReference>
<dbReference type="SUPFAM" id="SSF52016">
    <property type="entry name" value="LeuD/IlvD-like"/>
    <property type="match status" value="1"/>
</dbReference>
<dbReference type="PROSITE" id="PS00886">
    <property type="entry name" value="ILVD_EDD_1"/>
    <property type="match status" value="1"/>
</dbReference>
<dbReference type="PROSITE" id="PS00887">
    <property type="entry name" value="ILVD_EDD_2"/>
    <property type="match status" value="1"/>
</dbReference>
<reference key="1">
    <citation type="submission" date="2009-07" db="EMBL/GenBank/DDBJ databases">
        <title>Complete sequence of Geobacter sp. M21.</title>
        <authorList>
            <consortium name="US DOE Joint Genome Institute"/>
            <person name="Lucas S."/>
            <person name="Copeland A."/>
            <person name="Lapidus A."/>
            <person name="Glavina del Rio T."/>
            <person name="Dalin E."/>
            <person name="Tice H."/>
            <person name="Bruce D."/>
            <person name="Goodwin L."/>
            <person name="Pitluck S."/>
            <person name="Saunders E."/>
            <person name="Brettin T."/>
            <person name="Detter J.C."/>
            <person name="Han C."/>
            <person name="Larimer F."/>
            <person name="Land M."/>
            <person name="Hauser L."/>
            <person name="Kyrpides N."/>
            <person name="Ovchinnikova G."/>
            <person name="Lovley D."/>
        </authorList>
    </citation>
    <scope>NUCLEOTIDE SEQUENCE [LARGE SCALE GENOMIC DNA]</scope>
    <source>
        <strain>M21</strain>
    </source>
</reference>
<gene>
    <name evidence="1" type="primary">ilvD</name>
    <name type="ordered locus">GM21_1494</name>
</gene>
<name>ILVD_GEOSM</name>
<accession>C6E521</accession>
<organism>
    <name type="scientific">Geobacter sp. (strain M21)</name>
    <dbReference type="NCBI Taxonomy" id="443144"/>
    <lineage>
        <taxon>Bacteria</taxon>
        <taxon>Pseudomonadati</taxon>
        <taxon>Thermodesulfobacteriota</taxon>
        <taxon>Desulfuromonadia</taxon>
        <taxon>Geobacterales</taxon>
        <taxon>Geobacteraceae</taxon>
        <taxon>Geobacter</taxon>
    </lineage>
</organism>
<proteinExistence type="inferred from homology"/>
<keyword id="KW-0001">2Fe-2S</keyword>
<keyword id="KW-0028">Amino-acid biosynthesis</keyword>
<keyword id="KW-0100">Branched-chain amino acid biosynthesis</keyword>
<keyword id="KW-0408">Iron</keyword>
<keyword id="KW-0411">Iron-sulfur</keyword>
<keyword id="KW-0456">Lyase</keyword>
<keyword id="KW-0460">Magnesium</keyword>
<keyword id="KW-0479">Metal-binding</keyword>
<sequence length="553" mass="58406">MRSDTITQGLERTPHRALLKGTGLPQSEMGKPFIGIATSFTDLIPGHVGMRDLERFIEKGVHTGGGYSFFFGIPGVCDGISMGHKGMHYSLPTRELIADMVESVAEAHRLDGLVLLTNCDKITPGMLMAAARLDIPCIVVTAGPMMSGRGDAGRKYSFVTDTFEAMARYKAGVIDDAELARCEENACPGMGSCQGLFTANTMAILTETLGMSLPRCGTALAVSALKRRIAFASGERIVDLVRQNITPRSIMTREAFENAIRVDLALGGSSNTVLHLLAIAHEAGVELPLETFDILAKETPQLASMNPAGEHFMEDLDVAGGVAGVLKQLGDKIHDCPTLMGLSTKEIAASLKGVDEEVIHPLSNPVKKEGGIAVLFGNICPKGAVVKQSGVSDQMMKFTGTARCFDSEDKAMAAMMGGVVKGGDVVVIRYEGPKGGPGMREMLAPTAALMGLGLGDSVALITDGRFSGGTRGPCIGHIAPEAAAGGPIAFIEDGDTIELDIPARSLKVMVSDEVLAERRARWVAPEPKIKKGWLARYAKVVTSAHTGAITTAE</sequence>
<protein>
    <recommendedName>
        <fullName evidence="1">Dihydroxy-acid dehydratase</fullName>
        <shortName evidence="1">DAD</shortName>
        <ecNumber evidence="1">4.2.1.9</ecNumber>
    </recommendedName>
</protein>